<accession>P16093</accession>
<name>RIPK_TRIKI</name>
<reference key="1">
    <citation type="journal article" date="1988" name="Eur. J. Biochem.">
        <title>Trichokirin, a ribosome-inactivating protein from the seeds of Trichosanthes kirilowii Maximowicz. Purification, partial characterization and use for preparation of immunotoxins.</title>
        <authorList>
            <person name="Casellas P."/>
            <person name="Dussossoy D."/>
            <person name="Falasca A.I."/>
            <person name="Barbieri L."/>
            <person name="Guillemot J.-C."/>
            <person name="Ferrara P."/>
            <person name="Bolognesi A."/>
            <person name="Cenini P."/>
            <person name="Stirpe F."/>
        </authorList>
    </citation>
    <scope>PROTEIN SEQUENCE</scope>
    <source>
        <tissue>Seed</tissue>
    </source>
</reference>
<sequence length="16" mass="1605">DVSFSLSGGGTASYEK</sequence>
<evidence type="ECO:0000305" key="1"/>
<organism>
    <name type="scientific">Trichosanthes kirilowii</name>
    <name type="common">Chinese snake gourd</name>
    <name type="synonym">Chinese cucumber</name>
    <dbReference type="NCBI Taxonomy" id="3677"/>
    <lineage>
        <taxon>Eukaryota</taxon>
        <taxon>Viridiplantae</taxon>
        <taxon>Streptophyta</taxon>
        <taxon>Embryophyta</taxon>
        <taxon>Tracheophyta</taxon>
        <taxon>Spermatophyta</taxon>
        <taxon>Magnoliopsida</taxon>
        <taxon>eudicotyledons</taxon>
        <taxon>Gunneridae</taxon>
        <taxon>Pentapetalae</taxon>
        <taxon>rosids</taxon>
        <taxon>fabids</taxon>
        <taxon>Cucurbitales</taxon>
        <taxon>Cucurbitaceae</taxon>
        <taxon>Sicyoeae</taxon>
        <taxon>Trichosanthes</taxon>
    </lineage>
</organism>
<keyword id="KW-0903">Direct protein sequencing</keyword>
<keyword id="KW-0325">Glycoprotein</keyword>
<keyword id="KW-0378">Hydrolase</keyword>
<keyword id="KW-0611">Plant defense</keyword>
<keyword id="KW-0652">Protein synthesis inhibitor</keyword>
<keyword id="KW-0800">Toxin</keyword>
<protein>
    <recommendedName>
        <fullName>Ribosome-inactivating protein trichokirin</fullName>
        <ecNumber>3.2.2.22</ecNumber>
    </recommendedName>
    <alternativeName>
        <fullName>rRNA N-glycosidase</fullName>
    </alternativeName>
</protein>
<proteinExistence type="evidence at protein level"/>
<comment type="catalytic activity">
    <reaction>
        <text>Endohydrolysis of the N-glycosidic bond at one specific adenosine on the 28S rRNA.</text>
        <dbReference type="EC" id="3.2.2.22"/>
    </reaction>
</comment>
<comment type="PTM">
    <text>Glycosylated.</text>
</comment>
<comment type="similarity">
    <text evidence="1">Belongs to the ribosome-inactivating protein family. Type 1 RIP subfamily.</text>
</comment>
<feature type="chain" id="PRO_0000221408" description="Ribosome-inactivating protein trichokirin">
    <location>
        <begin position="1"/>
        <end position="16" status="greater than"/>
    </location>
</feature>
<feature type="non-terminal residue">
    <location>
        <position position="16"/>
    </location>
</feature>
<dbReference type="EC" id="3.2.2.22"/>
<dbReference type="PIR" id="S01669">
    <property type="entry name" value="S01669"/>
</dbReference>
<dbReference type="GO" id="GO:0030598">
    <property type="term" value="F:rRNA N-glycosylase activity"/>
    <property type="evidence" value="ECO:0007669"/>
    <property type="project" value="UniProtKB-EC"/>
</dbReference>
<dbReference type="GO" id="GO:0090729">
    <property type="term" value="F:toxin activity"/>
    <property type="evidence" value="ECO:0007669"/>
    <property type="project" value="UniProtKB-KW"/>
</dbReference>
<dbReference type="GO" id="GO:0006952">
    <property type="term" value="P:defense response"/>
    <property type="evidence" value="ECO:0007669"/>
    <property type="project" value="UniProtKB-KW"/>
</dbReference>
<dbReference type="GO" id="GO:0017148">
    <property type="term" value="P:negative regulation of translation"/>
    <property type="evidence" value="ECO:0007669"/>
    <property type="project" value="UniProtKB-KW"/>
</dbReference>